<sequence>MPLTDPAKLQIVQQRVFLKKVCRKCGALNPIRATKCRRCHSTNLRLKKKELPTKKG</sequence>
<comment type="similarity">
    <text evidence="1">Belongs to the eukaryotic ribosomal protein eL40 family.</text>
</comment>
<protein>
    <recommendedName>
        <fullName evidence="1">Large ribosomal subunit protein eL40</fullName>
    </recommendedName>
    <alternativeName>
        <fullName evidence="2">50S ribosomal protein L40e</fullName>
    </alternativeName>
</protein>
<proteinExistence type="inferred from homology"/>
<accession>C3N855</accession>
<reference key="1">
    <citation type="journal article" date="2009" name="Proc. Natl. Acad. Sci. U.S.A.">
        <title>Biogeography of the Sulfolobus islandicus pan-genome.</title>
        <authorList>
            <person name="Reno M.L."/>
            <person name="Held N.L."/>
            <person name="Fields C.J."/>
            <person name="Burke P.V."/>
            <person name="Whitaker R.J."/>
        </authorList>
    </citation>
    <scope>NUCLEOTIDE SEQUENCE [LARGE SCALE GENOMIC DNA]</scope>
    <source>
        <strain>Y.G.57.14 / Yellowstone #1</strain>
    </source>
</reference>
<dbReference type="EMBL" id="CP001403">
    <property type="protein sequence ID" value="ACP46342.1"/>
    <property type="molecule type" value="Genomic_DNA"/>
</dbReference>
<dbReference type="SMR" id="C3N855"/>
<dbReference type="KEGG" id="siy:YG5714_2088"/>
<dbReference type="HOGENOM" id="CLU_175093_1_0_2"/>
<dbReference type="Proteomes" id="UP000002308">
    <property type="component" value="Chromosome"/>
</dbReference>
<dbReference type="GO" id="GO:1990904">
    <property type="term" value="C:ribonucleoprotein complex"/>
    <property type="evidence" value="ECO:0007669"/>
    <property type="project" value="UniProtKB-KW"/>
</dbReference>
<dbReference type="GO" id="GO:0005840">
    <property type="term" value="C:ribosome"/>
    <property type="evidence" value="ECO:0007669"/>
    <property type="project" value="UniProtKB-KW"/>
</dbReference>
<dbReference type="GO" id="GO:0003735">
    <property type="term" value="F:structural constituent of ribosome"/>
    <property type="evidence" value="ECO:0007669"/>
    <property type="project" value="InterPro"/>
</dbReference>
<dbReference type="GO" id="GO:0006412">
    <property type="term" value="P:translation"/>
    <property type="evidence" value="ECO:0007669"/>
    <property type="project" value="UniProtKB-UniRule"/>
</dbReference>
<dbReference type="Gene3D" id="4.10.1060.50">
    <property type="match status" value="1"/>
</dbReference>
<dbReference type="HAMAP" id="MF_00788">
    <property type="entry name" value="Ribosomal_eL40"/>
    <property type="match status" value="1"/>
</dbReference>
<dbReference type="InterPro" id="IPR023657">
    <property type="entry name" value="Ribosomal_eL40_arc"/>
</dbReference>
<dbReference type="InterPro" id="IPR001975">
    <property type="entry name" value="Ribosomal_eL40_dom"/>
</dbReference>
<dbReference type="InterPro" id="IPR038587">
    <property type="entry name" value="Ribosomal_eL40_sf"/>
</dbReference>
<dbReference type="InterPro" id="IPR011332">
    <property type="entry name" value="Ribosomal_zn-bd"/>
</dbReference>
<dbReference type="NCBIfam" id="NF003161">
    <property type="entry name" value="PRK04136.1"/>
    <property type="match status" value="1"/>
</dbReference>
<dbReference type="PANTHER" id="PTHR39649">
    <property type="entry name" value="50S RIBOSOMAL PROTEIN L40E"/>
    <property type="match status" value="1"/>
</dbReference>
<dbReference type="PANTHER" id="PTHR39649:SF1">
    <property type="entry name" value="LARGE RIBOSOMAL SUBUNIT PROTEIN EL40"/>
    <property type="match status" value="1"/>
</dbReference>
<dbReference type="Pfam" id="PF01020">
    <property type="entry name" value="Ribosomal_L40e"/>
    <property type="match status" value="1"/>
</dbReference>
<dbReference type="SMART" id="SM01377">
    <property type="entry name" value="Ribosomal_L40e"/>
    <property type="match status" value="1"/>
</dbReference>
<dbReference type="SUPFAM" id="SSF57829">
    <property type="entry name" value="Zn-binding ribosomal proteins"/>
    <property type="match status" value="1"/>
</dbReference>
<organism>
    <name type="scientific">Saccharolobus islandicus (strain Y.G.57.14 / Yellowstone #1)</name>
    <name type="common">Sulfolobus islandicus</name>
    <dbReference type="NCBI Taxonomy" id="439386"/>
    <lineage>
        <taxon>Archaea</taxon>
        <taxon>Thermoproteota</taxon>
        <taxon>Thermoprotei</taxon>
        <taxon>Sulfolobales</taxon>
        <taxon>Sulfolobaceae</taxon>
        <taxon>Saccharolobus</taxon>
    </lineage>
</organism>
<gene>
    <name evidence="1" type="primary">rpl40e</name>
    <name type="ordered locus">YG5714_2088</name>
</gene>
<keyword id="KW-0687">Ribonucleoprotein</keyword>
<keyword id="KW-0689">Ribosomal protein</keyword>
<feature type="chain" id="PRO_1000212953" description="Large ribosomal subunit protein eL40">
    <location>
        <begin position="1"/>
        <end position="56"/>
    </location>
</feature>
<evidence type="ECO:0000255" key="1">
    <source>
        <dbReference type="HAMAP-Rule" id="MF_00788"/>
    </source>
</evidence>
<evidence type="ECO:0000305" key="2"/>
<name>RL40_SACI7</name>